<organism>
    <name type="scientific">Geotalea uraniireducens (strain Rf4)</name>
    <name type="common">Geobacter uraniireducens</name>
    <dbReference type="NCBI Taxonomy" id="351605"/>
    <lineage>
        <taxon>Bacteria</taxon>
        <taxon>Pseudomonadati</taxon>
        <taxon>Thermodesulfobacteriota</taxon>
        <taxon>Desulfuromonadia</taxon>
        <taxon>Geobacterales</taxon>
        <taxon>Geobacteraceae</taxon>
        <taxon>Geotalea</taxon>
    </lineage>
</organism>
<evidence type="ECO:0000255" key="1">
    <source>
        <dbReference type="HAMAP-Rule" id="MF_00171"/>
    </source>
</evidence>
<comment type="function">
    <text evidence="1">Formation of pseudouridine at positions 38, 39 and 40 in the anticodon stem and loop of transfer RNAs.</text>
</comment>
<comment type="catalytic activity">
    <reaction evidence="1">
        <text>uridine(38/39/40) in tRNA = pseudouridine(38/39/40) in tRNA</text>
        <dbReference type="Rhea" id="RHEA:22376"/>
        <dbReference type="Rhea" id="RHEA-COMP:10085"/>
        <dbReference type="Rhea" id="RHEA-COMP:10087"/>
        <dbReference type="ChEBI" id="CHEBI:65314"/>
        <dbReference type="ChEBI" id="CHEBI:65315"/>
        <dbReference type="EC" id="5.4.99.12"/>
    </reaction>
</comment>
<comment type="subunit">
    <text evidence="1">Homodimer.</text>
</comment>
<comment type="similarity">
    <text evidence="1">Belongs to the tRNA pseudouridine synthase TruA family.</text>
</comment>
<feature type="chain" id="PRO_1000077091" description="tRNA pseudouridine synthase A">
    <location>
        <begin position="1"/>
        <end position="244"/>
    </location>
</feature>
<feature type="active site" description="Nucleophile" evidence="1">
    <location>
        <position position="52"/>
    </location>
</feature>
<feature type="binding site" evidence="1">
    <location>
        <position position="110"/>
    </location>
    <ligand>
        <name>substrate</name>
    </ligand>
</feature>
<sequence>MRQIKLIIEYDGTNYSGWQVQPNGITIQQLIEASLATMLGEPVKLHSSGRTDAGVHALGMVAAFKTGKLLPLRAFSDGLNALLPNDIAIRDAVEAPLSFNPRADAKSKHYRYTIYNAVRRSPLARLSSWHLRGALDIERMQAAASHFVGEHDFAAFRASNCAAKTTVRRLFSVSVAKDGESVIIDVHGSGFLKNMVRIIAGTLAEVGQGKKNPDAVPGLLVSGDRAASGITAPPQGLCLVEVFY</sequence>
<gene>
    <name evidence="1" type="primary">truA</name>
    <name type="ordered locus">Gura_1048</name>
</gene>
<accession>A5GB00</accession>
<keyword id="KW-0413">Isomerase</keyword>
<keyword id="KW-1185">Reference proteome</keyword>
<keyword id="KW-0819">tRNA processing</keyword>
<dbReference type="EC" id="5.4.99.12" evidence="1"/>
<dbReference type="EMBL" id="CP000698">
    <property type="protein sequence ID" value="ABQ25254.1"/>
    <property type="molecule type" value="Genomic_DNA"/>
</dbReference>
<dbReference type="RefSeq" id="WP_011937978.1">
    <property type="nucleotide sequence ID" value="NC_009483.1"/>
</dbReference>
<dbReference type="SMR" id="A5GB00"/>
<dbReference type="STRING" id="351605.Gura_1048"/>
<dbReference type="KEGG" id="gur:Gura_1048"/>
<dbReference type="HOGENOM" id="CLU_014673_0_1_7"/>
<dbReference type="OrthoDB" id="9811823at2"/>
<dbReference type="Proteomes" id="UP000006695">
    <property type="component" value="Chromosome"/>
</dbReference>
<dbReference type="GO" id="GO:0003723">
    <property type="term" value="F:RNA binding"/>
    <property type="evidence" value="ECO:0007669"/>
    <property type="project" value="InterPro"/>
</dbReference>
<dbReference type="GO" id="GO:0160147">
    <property type="term" value="F:tRNA pseudouridine(38-40) synthase activity"/>
    <property type="evidence" value="ECO:0007669"/>
    <property type="project" value="UniProtKB-EC"/>
</dbReference>
<dbReference type="GO" id="GO:0031119">
    <property type="term" value="P:tRNA pseudouridine synthesis"/>
    <property type="evidence" value="ECO:0007669"/>
    <property type="project" value="UniProtKB-UniRule"/>
</dbReference>
<dbReference type="CDD" id="cd02570">
    <property type="entry name" value="PseudoU_synth_EcTruA"/>
    <property type="match status" value="1"/>
</dbReference>
<dbReference type="FunFam" id="3.30.70.580:FF:000001">
    <property type="entry name" value="tRNA pseudouridine synthase A"/>
    <property type="match status" value="1"/>
</dbReference>
<dbReference type="Gene3D" id="3.30.70.660">
    <property type="entry name" value="Pseudouridine synthase I, catalytic domain, C-terminal subdomain"/>
    <property type="match status" value="1"/>
</dbReference>
<dbReference type="Gene3D" id="3.30.70.580">
    <property type="entry name" value="Pseudouridine synthase I, catalytic domain, N-terminal subdomain"/>
    <property type="match status" value="1"/>
</dbReference>
<dbReference type="HAMAP" id="MF_00171">
    <property type="entry name" value="TruA"/>
    <property type="match status" value="1"/>
</dbReference>
<dbReference type="InterPro" id="IPR020103">
    <property type="entry name" value="PsdUridine_synth_cat_dom_sf"/>
</dbReference>
<dbReference type="InterPro" id="IPR001406">
    <property type="entry name" value="PsdUridine_synth_TruA"/>
</dbReference>
<dbReference type="InterPro" id="IPR020097">
    <property type="entry name" value="PsdUridine_synth_TruA_a/b_dom"/>
</dbReference>
<dbReference type="InterPro" id="IPR020095">
    <property type="entry name" value="PsdUridine_synth_TruA_C"/>
</dbReference>
<dbReference type="InterPro" id="IPR020094">
    <property type="entry name" value="TruA/RsuA/RluB/E/F_N"/>
</dbReference>
<dbReference type="NCBIfam" id="TIGR00071">
    <property type="entry name" value="hisT_truA"/>
    <property type="match status" value="1"/>
</dbReference>
<dbReference type="PANTHER" id="PTHR11142">
    <property type="entry name" value="PSEUDOURIDYLATE SYNTHASE"/>
    <property type="match status" value="1"/>
</dbReference>
<dbReference type="PANTHER" id="PTHR11142:SF0">
    <property type="entry name" value="TRNA PSEUDOURIDINE SYNTHASE-LIKE 1"/>
    <property type="match status" value="1"/>
</dbReference>
<dbReference type="Pfam" id="PF01416">
    <property type="entry name" value="PseudoU_synth_1"/>
    <property type="match status" value="2"/>
</dbReference>
<dbReference type="PIRSF" id="PIRSF001430">
    <property type="entry name" value="tRNA_psdUrid_synth"/>
    <property type="match status" value="1"/>
</dbReference>
<dbReference type="SUPFAM" id="SSF55120">
    <property type="entry name" value="Pseudouridine synthase"/>
    <property type="match status" value="1"/>
</dbReference>
<reference key="1">
    <citation type="submission" date="2007-05" db="EMBL/GenBank/DDBJ databases">
        <title>Complete sequence of Geobacter uraniireducens Rf4.</title>
        <authorList>
            <consortium name="US DOE Joint Genome Institute"/>
            <person name="Copeland A."/>
            <person name="Lucas S."/>
            <person name="Lapidus A."/>
            <person name="Barry K."/>
            <person name="Detter J.C."/>
            <person name="Glavina del Rio T."/>
            <person name="Hammon N."/>
            <person name="Israni S."/>
            <person name="Dalin E."/>
            <person name="Tice H."/>
            <person name="Pitluck S."/>
            <person name="Chertkov O."/>
            <person name="Brettin T."/>
            <person name="Bruce D."/>
            <person name="Han C."/>
            <person name="Schmutz J."/>
            <person name="Larimer F."/>
            <person name="Land M."/>
            <person name="Hauser L."/>
            <person name="Kyrpides N."/>
            <person name="Mikhailova N."/>
            <person name="Shelobolina E."/>
            <person name="Aklujkar M."/>
            <person name="Lovley D."/>
            <person name="Richardson P."/>
        </authorList>
    </citation>
    <scope>NUCLEOTIDE SEQUENCE [LARGE SCALE GENOMIC DNA]</scope>
    <source>
        <strain>ATCC BAA-1134 / JCM 13001 / Rf4</strain>
    </source>
</reference>
<proteinExistence type="inferred from homology"/>
<name>TRUA_GEOUR</name>
<protein>
    <recommendedName>
        <fullName evidence="1">tRNA pseudouridine synthase A</fullName>
        <ecNumber evidence="1">5.4.99.12</ecNumber>
    </recommendedName>
    <alternativeName>
        <fullName evidence="1">tRNA pseudouridine(38-40) synthase</fullName>
    </alternativeName>
    <alternativeName>
        <fullName evidence="1">tRNA pseudouridylate synthase I</fullName>
    </alternativeName>
    <alternativeName>
        <fullName evidence="1">tRNA-uridine isomerase I</fullName>
    </alternativeName>
</protein>